<protein>
    <recommendedName>
        <fullName evidence="1">Imidazole glycerol phosphate synthase subunit HisF</fullName>
        <ecNumber evidence="1">4.3.2.10</ecNumber>
    </recommendedName>
    <alternativeName>
        <fullName evidence="1">IGP synthase cyclase subunit</fullName>
    </alternativeName>
    <alternativeName>
        <fullName evidence="1">IGP synthase subunit HisF</fullName>
    </alternativeName>
    <alternativeName>
        <fullName evidence="1">ImGP synthase subunit HisF</fullName>
        <shortName evidence="1">IGPS subunit HisF</shortName>
    </alternativeName>
</protein>
<name>HIS6_PARDP</name>
<dbReference type="EC" id="4.3.2.10" evidence="1"/>
<dbReference type="EMBL" id="CP000489">
    <property type="protein sequence ID" value="ABL69982.1"/>
    <property type="molecule type" value="Genomic_DNA"/>
</dbReference>
<dbReference type="RefSeq" id="WP_011748179.1">
    <property type="nucleotide sequence ID" value="NC_008686.1"/>
</dbReference>
<dbReference type="SMR" id="A1B388"/>
<dbReference type="STRING" id="318586.Pden_1887"/>
<dbReference type="EnsemblBacteria" id="ABL69982">
    <property type="protein sequence ID" value="ABL69982"/>
    <property type="gene ID" value="Pden_1887"/>
</dbReference>
<dbReference type="GeneID" id="93450285"/>
<dbReference type="KEGG" id="pde:Pden_1887"/>
<dbReference type="eggNOG" id="COG0107">
    <property type="taxonomic scope" value="Bacteria"/>
</dbReference>
<dbReference type="HOGENOM" id="CLU_048577_4_0_5"/>
<dbReference type="OrthoDB" id="9781903at2"/>
<dbReference type="UniPathway" id="UPA00031">
    <property type="reaction ID" value="UER00010"/>
</dbReference>
<dbReference type="Proteomes" id="UP000000361">
    <property type="component" value="Chromosome 1"/>
</dbReference>
<dbReference type="GO" id="GO:0005737">
    <property type="term" value="C:cytoplasm"/>
    <property type="evidence" value="ECO:0007669"/>
    <property type="project" value="UniProtKB-SubCell"/>
</dbReference>
<dbReference type="GO" id="GO:0000107">
    <property type="term" value="F:imidazoleglycerol-phosphate synthase activity"/>
    <property type="evidence" value="ECO:0007669"/>
    <property type="project" value="UniProtKB-UniRule"/>
</dbReference>
<dbReference type="GO" id="GO:0016829">
    <property type="term" value="F:lyase activity"/>
    <property type="evidence" value="ECO:0007669"/>
    <property type="project" value="UniProtKB-KW"/>
</dbReference>
<dbReference type="GO" id="GO:0000105">
    <property type="term" value="P:L-histidine biosynthetic process"/>
    <property type="evidence" value="ECO:0007669"/>
    <property type="project" value="UniProtKB-UniRule"/>
</dbReference>
<dbReference type="CDD" id="cd04731">
    <property type="entry name" value="HisF"/>
    <property type="match status" value="1"/>
</dbReference>
<dbReference type="FunFam" id="3.20.20.70:FF:000006">
    <property type="entry name" value="Imidazole glycerol phosphate synthase subunit HisF"/>
    <property type="match status" value="1"/>
</dbReference>
<dbReference type="Gene3D" id="3.20.20.70">
    <property type="entry name" value="Aldolase class I"/>
    <property type="match status" value="1"/>
</dbReference>
<dbReference type="HAMAP" id="MF_01013">
    <property type="entry name" value="HisF"/>
    <property type="match status" value="1"/>
</dbReference>
<dbReference type="InterPro" id="IPR013785">
    <property type="entry name" value="Aldolase_TIM"/>
</dbReference>
<dbReference type="InterPro" id="IPR006062">
    <property type="entry name" value="His_biosynth"/>
</dbReference>
<dbReference type="InterPro" id="IPR004651">
    <property type="entry name" value="HisF"/>
</dbReference>
<dbReference type="InterPro" id="IPR050064">
    <property type="entry name" value="IGPS_HisA/HisF"/>
</dbReference>
<dbReference type="InterPro" id="IPR011060">
    <property type="entry name" value="RibuloseP-bd_barrel"/>
</dbReference>
<dbReference type="NCBIfam" id="TIGR00735">
    <property type="entry name" value="hisF"/>
    <property type="match status" value="1"/>
</dbReference>
<dbReference type="PANTHER" id="PTHR21235:SF2">
    <property type="entry name" value="IMIDAZOLE GLYCEROL PHOSPHATE SYNTHASE HISHF"/>
    <property type="match status" value="1"/>
</dbReference>
<dbReference type="PANTHER" id="PTHR21235">
    <property type="entry name" value="IMIDAZOLE GLYCEROL PHOSPHATE SYNTHASE SUBUNIT HISF/H IGP SYNTHASE SUBUNIT HISF/H"/>
    <property type="match status" value="1"/>
</dbReference>
<dbReference type="Pfam" id="PF00977">
    <property type="entry name" value="His_biosynth"/>
    <property type="match status" value="1"/>
</dbReference>
<dbReference type="SUPFAM" id="SSF51366">
    <property type="entry name" value="Ribulose-phoshate binding barrel"/>
    <property type="match status" value="1"/>
</dbReference>
<proteinExistence type="inferred from homology"/>
<keyword id="KW-0028">Amino-acid biosynthesis</keyword>
<keyword id="KW-0963">Cytoplasm</keyword>
<keyword id="KW-0368">Histidine biosynthesis</keyword>
<keyword id="KW-0456">Lyase</keyword>
<keyword id="KW-1185">Reference proteome</keyword>
<sequence length="253" mass="26375">MLKTRVIPCLDVADGRVVKGVNFVDLRDAGDPVEAARAYDAAGADEICFLDIHATHENRGTMYDLVTRTAEACFVPLTVGGGVRSHQDVRALLLAGADKVSFNSAAVANPDVIAEAADRFGSQCIVCAIDAKTVAPGKWEIFTHGGRKPTGIDAVEFARTVAAKGAGEILLTSMDRDGTKSGFNIPLTRAVADAVTIPVIASGGVGMLEHLAEGVLEGHASAVLAASIFHFGTFTVREAKEHLAAAGIPVRLT</sequence>
<accession>A1B388</accession>
<comment type="function">
    <text evidence="1">IGPS catalyzes the conversion of PRFAR and glutamine to IGP, AICAR and glutamate. The HisF subunit catalyzes the cyclization activity that produces IGP and AICAR from PRFAR using the ammonia provided by the HisH subunit.</text>
</comment>
<comment type="catalytic activity">
    <reaction evidence="1">
        <text>5-[(5-phospho-1-deoxy-D-ribulos-1-ylimino)methylamino]-1-(5-phospho-beta-D-ribosyl)imidazole-4-carboxamide + L-glutamine = D-erythro-1-(imidazol-4-yl)glycerol 3-phosphate + 5-amino-1-(5-phospho-beta-D-ribosyl)imidazole-4-carboxamide + L-glutamate + H(+)</text>
        <dbReference type="Rhea" id="RHEA:24793"/>
        <dbReference type="ChEBI" id="CHEBI:15378"/>
        <dbReference type="ChEBI" id="CHEBI:29985"/>
        <dbReference type="ChEBI" id="CHEBI:58278"/>
        <dbReference type="ChEBI" id="CHEBI:58359"/>
        <dbReference type="ChEBI" id="CHEBI:58475"/>
        <dbReference type="ChEBI" id="CHEBI:58525"/>
        <dbReference type="EC" id="4.3.2.10"/>
    </reaction>
</comment>
<comment type="pathway">
    <text evidence="1">Amino-acid biosynthesis; L-histidine biosynthesis; L-histidine from 5-phospho-alpha-D-ribose 1-diphosphate: step 5/9.</text>
</comment>
<comment type="subunit">
    <text evidence="1">Heterodimer of HisH and HisF.</text>
</comment>
<comment type="subcellular location">
    <subcellularLocation>
        <location evidence="1">Cytoplasm</location>
    </subcellularLocation>
</comment>
<comment type="similarity">
    <text evidence="1">Belongs to the HisA/HisF family.</text>
</comment>
<organism>
    <name type="scientific">Paracoccus denitrificans (strain Pd 1222)</name>
    <dbReference type="NCBI Taxonomy" id="318586"/>
    <lineage>
        <taxon>Bacteria</taxon>
        <taxon>Pseudomonadati</taxon>
        <taxon>Pseudomonadota</taxon>
        <taxon>Alphaproteobacteria</taxon>
        <taxon>Rhodobacterales</taxon>
        <taxon>Paracoccaceae</taxon>
        <taxon>Paracoccus</taxon>
    </lineage>
</organism>
<evidence type="ECO:0000255" key="1">
    <source>
        <dbReference type="HAMAP-Rule" id="MF_01013"/>
    </source>
</evidence>
<gene>
    <name evidence="1" type="primary">hisF</name>
    <name type="ordered locus">Pden_1887</name>
</gene>
<feature type="chain" id="PRO_1000063108" description="Imidazole glycerol phosphate synthase subunit HisF">
    <location>
        <begin position="1"/>
        <end position="253"/>
    </location>
</feature>
<feature type="active site" evidence="1">
    <location>
        <position position="11"/>
    </location>
</feature>
<feature type="active site" evidence="1">
    <location>
        <position position="130"/>
    </location>
</feature>
<reference key="1">
    <citation type="submission" date="2006-12" db="EMBL/GenBank/DDBJ databases">
        <title>Complete sequence of chromosome 1 of Paracoccus denitrificans PD1222.</title>
        <authorList>
            <person name="Copeland A."/>
            <person name="Lucas S."/>
            <person name="Lapidus A."/>
            <person name="Barry K."/>
            <person name="Detter J.C."/>
            <person name="Glavina del Rio T."/>
            <person name="Hammon N."/>
            <person name="Israni S."/>
            <person name="Dalin E."/>
            <person name="Tice H."/>
            <person name="Pitluck S."/>
            <person name="Munk A.C."/>
            <person name="Brettin T."/>
            <person name="Bruce D."/>
            <person name="Han C."/>
            <person name="Tapia R."/>
            <person name="Gilna P."/>
            <person name="Schmutz J."/>
            <person name="Larimer F."/>
            <person name="Land M."/>
            <person name="Hauser L."/>
            <person name="Kyrpides N."/>
            <person name="Lykidis A."/>
            <person name="Spiro S."/>
            <person name="Richardson D.J."/>
            <person name="Moir J.W.B."/>
            <person name="Ferguson S.J."/>
            <person name="van Spanning R.J.M."/>
            <person name="Richardson P."/>
        </authorList>
    </citation>
    <scope>NUCLEOTIDE SEQUENCE [LARGE SCALE GENOMIC DNA]</scope>
    <source>
        <strain>Pd 1222</strain>
    </source>
</reference>